<keyword id="KW-0687">Ribonucleoprotein</keyword>
<keyword id="KW-0689">Ribosomal protein</keyword>
<keyword id="KW-0694">RNA-binding</keyword>
<keyword id="KW-0699">rRNA-binding</keyword>
<protein>
    <recommendedName>
        <fullName evidence="1">Large ribosomal subunit protein bL20</fullName>
    </recommendedName>
    <alternativeName>
        <fullName evidence="2">50S ribosomal protein L20</fullName>
    </alternativeName>
</protein>
<comment type="function">
    <text evidence="1">Binds directly to 23S ribosomal RNA and is necessary for the in vitro assembly process of the 50S ribosomal subunit. It is not involved in the protein synthesizing functions of that subunit.</text>
</comment>
<comment type="similarity">
    <text evidence="1">Belongs to the bacterial ribosomal protein bL20 family.</text>
</comment>
<proteinExistence type="inferred from homology"/>
<reference key="1">
    <citation type="submission" date="2008-04" db="EMBL/GenBank/DDBJ databases">
        <title>Complete sequence of Clostridium botulinum strain Eklund.</title>
        <authorList>
            <person name="Brinkac L.M."/>
            <person name="Brown J.L."/>
            <person name="Bruce D."/>
            <person name="Detter C."/>
            <person name="Munk C."/>
            <person name="Smith L.A."/>
            <person name="Smith T.J."/>
            <person name="Sutton G."/>
            <person name="Brettin T.S."/>
        </authorList>
    </citation>
    <scope>NUCLEOTIDE SEQUENCE [LARGE SCALE GENOMIC DNA]</scope>
    <source>
        <strain>Eklund 17B / Type B</strain>
    </source>
</reference>
<organism>
    <name type="scientific">Clostridium botulinum (strain Eklund 17B / Type B)</name>
    <dbReference type="NCBI Taxonomy" id="935198"/>
    <lineage>
        <taxon>Bacteria</taxon>
        <taxon>Bacillati</taxon>
        <taxon>Bacillota</taxon>
        <taxon>Clostridia</taxon>
        <taxon>Eubacteriales</taxon>
        <taxon>Clostridiaceae</taxon>
        <taxon>Clostridium</taxon>
    </lineage>
</organism>
<evidence type="ECO:0000255" key="1">
    <source>
        <dbReference type="HAMAP-Rule" id="MF_00382"/>
    </source>
</evidence>
<evidence type="ECO:0000305" key="2"/>
<name>RL20_CLOBB</name>
<accession>B2TS59</accession>
<dbReference type="EMBL" id="CP001056">
    <property type="protein sequence ID" value="ACD23204.1"/>
    <property type="molecule type" value="Genomic_DNA"/>
</dbReference>
<dbReference type="SMR" id="B2TS59"/>
<dbReference type="KEGG" id="cbk:CLL_A2477"/>
<dbReference type="PATRIC" id="fig|935198.13.peg.2437"/>
<dbReference type="HOGENOM" id="CLU_123265_0_1_9"/>
<dbReference type="Proteomes" id="UP000001195">
    <property type="component" value="Chromosome"/>
</dbReference>
<dbReference type="GO" id="GO:1990904">
    <property type="term" value="C:ribonucleoprotein complex"/>
    <property type="evidence" value="ECO:0007669"/>
    <property type="project" value="UniProtKB-KW"/>
</dbReference>
<dbReference type="GO" id="GO:0005840">
    <property type="term" value="C:ribosome"/>
    <property type="evidence" value="ECO:0007669"/>
    <property type="project" value="UniProtKB-KW"/>
</dbReference>
<dbReference type="GO" id="GO:0019843">
    <property type="term" value="F:rRNA binding"/>
    <property type="evidence" value="ECO:0007669"/>
    <property type="project" value="UniProtKB-UniRule"/>
</dbReference>
<dbReference type="GO" id="GO:0003735">
    <property type="term" value="F:structural constituent of ribosome"/>
    <property type="evidence" value="ECO:0007669"/>
    <property type="project" value="InterPro"/>
</dbReference>
<dbReference type="GO" id="GO:0000027">
    <property type="term" value="P:ribosomal large subunit assembly"/>
    <property type="evidence" value="ECO:0007669"/>
    <property type="project" value="UniProtKB-UniRule"/>
</dbReference>
<dbReference type="GO" id="GO:0006412">
    <property type="term" value="P:translation"/>
    <property type="evidence" value="ECO:0007669"/>
    <property type="project" value="InterPro"/>
</dbReference>
<dbReference type="CDD" id="cd07026">
    <property type="entry name" value="Ribosomal_L20"/>
    <property type="match status" value="1"/>
</dbReference>
<dbReference type="FunFam" id="1.10.1900.20:FF:000001">
    <property type="entry name" value="50S ribosomal protein L20"/>
    <property type="match status" value="1"/>
</dbReference>
<dbReference type="Gene3D" id="6.10.160.10">
    <property type="match status" value="1"/>
</dbReference>
<dbReference type="Gene3D" id="1.10.1900.20">
    <property type="entry name" value="Ribosomal protein L20"/>
    <property type="match status" value="1"/>
</dbReference>
<dbReference type="HAMAP" id="MF_00382">
    <property type="entry name" value="Ribosomal_bL20"/>
    <property type="match status" value="1"/>
</dbReference>
<dbReference type="InterPro" id="IPR005813">
    <property type="entry name" value="Ribosomal_bL20"/>
</dbReference>
<dbReference type="InterPro" id="IPR049946">
    <property type="entry name" value="RIBOSOMAL_L20_CS"/>
</dbReference>
<dbReference type="InterPro" id="IPR035566">
    <property type="entry name" value="Ribosomal_protein_bL20_C"/>
</dbReference>
<dbReference type="NCBIfam" id="TIGR01032">
    <property type="entry name" value="rplT_bact"/>
    <property type="match status" value="1"/>
</dbReference>
<dbReference type="PANTHER" id="PTHR10986">
    <property type="entry name" value="39S RIBOSOMAL PROTEIN L20"/>
    <property type="match status" value="1"/>
</dbReference>
<dbReference type="Pfam" id="PF00453">
    <property type="entry name" value="Ribosomal_L20"/>
    <property type="match status" value="1"/>
</dbReference>
<dbReference type="PRINTS" id="PR00062">
    <property type="entry name" value="RIBOSOMALL20"/>
</dbReference>
<dbReference type="SUPFAM" id="SSF74731">
    <property type="entry name" value="Ribosomal protein L20"/>
    <property type="match status" value="1"/>
</dbReference>
<dbReference type="PROSITE" id="PS00937">
    <property type="entry name" value="RIBOSOMAL_L20"/>
    <property type="match status" value="1"/>
</dbReference>
<gene>
    <name evidence="1" type="primary">rplT</name>
    <name type="ordered locus">CLL_A2477</name>
</gene>
<feature type="chain" id="PRO_1000122295" description="Large ribosomal subunit protein bL20">
    <location>
        <begin position="1"/>
        <end position="119"/>
    </location>
</feature>
<sequence length="119" mass="13539">MARVKRAKNARKNHKKVLKLAKGYYGGKSKLFKTANESVIRALRNSYVGRKNKKRDYRRLWIARINAATRINGLSYSKFMNGIKLAGIDINRKMLSEIAINDAKAFADLVEVAKKQLNA</sequence>